<evidence type="ECO:0000255" key="1">
    <source>
        <dbReference type="HAMAP-Rule" id="MF_00065"/>
    </source>
</evidence>
<name>CYSC_AERHH</name>
<comment type="function">
    <text evidence="1">Catalyzes the synthesis of activated sulfate.</text>
</comment>
<comment type="catalytic activity">
    <reaction evidence="1">
        <text>adenosine 5'-phosphosulfate + ATP = 3'-phosphoadenylyl sulfate + ADP + H(+)</text>
        <dbReference type="Rhea" id="RHEA:24152"/>
        <dbReference type="ChEBI" id="CHEBI:15378"/>
        <dbReference type="ChEBI" id="CHEBI:30616"/>
        <dbReference type="ChEBI" id="CHEBI:58243"/>
        <dbReference type="ChEBI" id="CHEBI:58339"/>
        <dbReference type="ChEBI" id="CHEBI:456216"/>
        <dbReference type="EC" id="2.7.1.25"/>
    </reaction>
</comment>
<comment type="pathway">
    <text evidence="1">Sulfur metabolism; hydrogen sulfide biosynthesis; sulfite from sulfate: step 2/3.</text>
</comment>
<comment type="similarity">
    <text evidence="1">Belongs to the APS kinase family.</text>
</comment>
<feature type="chain" id="PRO_1000092235" description="Adenylyl-sulfate kinase">
    <location>
        <begin position="1"/>
        <end position="197"/>
    </location>
</feature>
<feature type="active site" description="Phosphoserine intermediate" evidence="1">
    <location>
        <position position="105"/>
    </location>
</feature>
<feature type="binding site" evidence="1">
    <location>
        <begin position="31"/>
        <end position="38"/>
    </location>
    <ligand>
        <name>ATP</name>
        <dbReference type="ChEBI" id="CHEBI:30616"/>
    </ligand>
</feature>
<accession>A0KP33</accession>
<keyword id="KW-0067">ATP-binding</keyword>
<keyword id="KW-0418">Kinase</keyword>
<keyword id="KW-0547">Nucleotide-binding</keyword>
<keyword id="KW-0597">Phosphoprotein</keyword>
<keyword id="KW-1185">Reference proteome</keyword>
<keyword id="KW-0808">Transferase</keyword>
<dbReference type="EC" id="2.7.1.25" evidence="1"/>
<dbReference type="EMBL" id="CP000462">
    <property type="protein sequence ID" value="ABK38532.1"/>
    <property type="molecule type" value="Genomic_DNA"/>
</dbReference>
<dbReference type="RefSeq" id="WP_011707306.1">
    <property type="nucleotide sequence ID" value="NC_008570.1"/>
</dbReference>
<dbReference type="RefSeq" id="YP_858034.1">
    <property type="nucleotide sequence ID" value="NC_008570.1"/>
</dbReference>
<dbReference type="SMR" id="A0KP33"/>
<dbReference type="STRING" id="380703.AHA_3564"/>
<dbReference type="EnsemblBacteria" id="ABK38532">
    <property type="protein sequence ID" value="ABK38532"/>
    <property type="gene ID" value="AHA_3564"/>
</dbReference>
<dbReference type="GeneID" id="4488259"/>
<dbReference type="KEGG" id="aha:AHA_3564"/>
<dbReference type="PATRIC" id="fig|380703.7.peg.3551"/>
<dbReference type="eggNOG" id="COG0529">
    <property type="taxonomic scope" value="Bacteria"/>
</dbReference>
<dbReference type="HOGENOM" id="CLU_046932_1_0_6"/>
<dbReference type="OrthoDB" id="9804504at2"/>
<dbReference type="UniPathway" id="UPA00140">
    <property type="reaction ID" value="UER00205"/>
</dbReference>
<dbReference type="Proteomes" id="UP000000756">
    <property type="component" value="Chromosome"/>
</dbReference>
<dbReference type="GO" id="GO:0004020">
    <property type="term" value="F:adenylylsulfate kinase activity"/>
    <property type="evidence" value="ECO:0007669"/>
    <property type="project" value="UniProtKB-UniRule"/>
</dbReference>
<dbReference type="GO" id="GO:0005524">
    <property type="term" value="F:ATP binding"/>
    <property type="evidence" value="ECO:0007669"/>
    <property type="project" value="UniProtKB-UniRule"/>
</dbReference>
<dbReference type="GO" id="GO:0070814">
    <property type="term" value="P:hydrogen sulfide biosynthetic process"/>
    <property type="evidence" value="ECO:0007669"/>
    <property type="project" value="UniProtKB-UniRule"/>
</dbReference>
<dbReference type="GO" id="GO:0000103">
    <property type="term" value="P:sulfate assimilation"/>
    <property type="evidence" value="ECO:0007669"/>
    <property type="project" value="UniProtKB-UniRule"/>
</dbReference>
<dbReference type="CDD" id="cd02027">
    <property type="entry name" value="APSK"/>
    <property type="match status" value="1"/>
</dbReference>
<dbReference type="FunFam" id="3.40.50.300:FF:000212">
    <property type="entry name" value="Adenylyl-sulfate kinase"/>
    <property type="match status" value="1"/>
</dbReference>
<dbReference type="Gene3D" id="3.40.50.300">
    <property type="entry name" value="P-loop containing nucleotide triphosphate hydrolases"/>
    <property type="match status" value="1"/>
</dbReference>
<dbReference type="HAMAP" id="MF_00065">
    <property type="entry name" value="Adenylyl_sulf_kinase"/>
    <property type="match status" value="1"/>
</dbReference>
<dbReference type="InterPro" id="IPR002891">
    <property type="entry name" value="APS_kinase"/>
</dbReference>
<dbReference type="InterPro" id="IPR027417">
    <property type="entry name" value="P-loop_NTPase"/>
</dbReference>
<dbReference type="NCBIfam" id="TIGR00455">
    <property type="entry name" value="apsK"/>
    <property type="match status" value="1"/>
</dbReference>
<dbReference type="NCBIfam" id="NF003013">
    <property type="entry name" value="PRK03846.1"/>
    <property type="match status" value="1"/>
</dbReference>
<dbReference type="PANTHER" id="PTHR11055:SF63">
    <property type="entry name" value="ADENYLYL-SULFATE KINASE 1, CHLOROPLASTIC"/>
    <property type="match status" value="1"/>
</dbReference>
<dbReference type="PANTHER" id="PTHR11055">
    <property type="entry name" value="BIFUNCTIONAL 3'-PHOSPHOADENOSINE 5'-PHOSPHOSULFATE SYNTHASE"/>
    <property type="match status" value="1"/>
</dbReference>
<dbReference type="Pfam" id="PF01583">
    <property type="entry name" value="APS_kinase"/>
    <property type="match status" value="1"/>
</dbReference>
<dbReference type="SUPFAM" id="SSF52540">
    <property type="entry name" value="P-loop containing nucleoside triphosphate hydrolases"/>
    <property type="match status" value="1"/>
</dbReference>
<proteinExistence type="inferred from homology"/>
<organism>
    <name type="scientific">Aeromonas hydrophila subsp. hydrophila (strain ATCC 7966 / DSM 30187 / BCRC 13018 / CCUG 14551 / JCM 1027 / KCTC 2358 / NCIMB 9240 / NCTC 8049)</name>
    <dbReference type="NCBI Taxonomy" id="380703"/>
    <lineage>
        <taxon>Bacteria</taxon>
        <taxon>Pseudomonadati</taxon>
        <taxon>Pseudomonadota</taxon>
        <taxon>Gammaproteobacteria</taxon>
        <taxon>Aeromonadales</taxon>
        <taxon>Aeromonadaceae</taxon>
        <taxon>Aeromonas</taxon>
    </lineage>
</organism>
<reference key="1">
    <citation type="journal article" date="2006" name="J. Bacteriol.">
        <title>Genome sequence of Aeromonas hydrophila ATCC 7966T: jack of all trades.</title>
        <authorList>
            <person name="Seshadri R."/>
            <person name="Joseph S.W."/>
            <person name="Chopra A.K."/>
            <person name="Sha J."/>
            <person name="Shaw J."/>
            <person name="Graf J."/>
            <person name="Haft D.H."/>
            <person name="Wu M."/>
            <person name="Ren Q."/>
            <person name="Rosovitz M.J."/>
            <person name="Madupu R."/>
            <person name="Tallon L."/>
            <person name="Kim M."/>
            <person name="Jin S."/>
            <person name="Vuong H."/>
            <person name="Stine O.C."/>
            <person name="Ali A."/>
            <person name="Horneman A.J."/>
            <person name="Heidelberg J.F."/>
        </authorList>
    </citation>
    <scope>NUCLEOTIDE SEQUENCE [LARGE SCALE GENOMIC DNA]</scope>
    <source>
        <strain>ATCC 7966 / DSM 30187 / BCRC 13018 / CCUG 14551 / JCM 1027 / KCTC 2358 / NCIMB 9240 / NCTC 8049</strain>
    </source>
</reference>
<sequence length="197" mass="21412">MSNIVWHAHAVDKQSRAEQKGQKPLVIWFTGLSGAGKSTLAGALEQALAASGKHTYLLDGDNVRHGLCGDLGFDDAARQENIRRVGEVAKLMVDAGLIVLTAFISPFRAERELVRNLVGEGEFVEVFVDAPLSVCEERDPKGLYKKARAGEIRNFTGIDSAYEAPEQPEIHLLNAGKPVAALVDELLTALRLRVLID</sequence>
<gene>
    <name evidence="1" type="primary">cysC</name>
    <name type="ordered locus">AHA_3564</name>
</gene>
<protein>
    <recommendedName>
        <fullName evidence="1">Adenylyl-sulfate kinase</fullName>
        <ecNumber evidence="1">2.7.1.25</ecNumber>
    </recommendedName>
    <alternativeName>
        <fullName evidence="1">APS kinase</fullName>
    </alternativeName>
    <alternativeName>
        <fullName evidence="1">ATP adenosine-5'-phosphosulfate 3'-phosphotransferase</fullName>
    </alternativeName>
    <alternativeName>
        <fullName evidence="1">Adenosine-5'-phosphosulfate kinase</fullName>
    </alternativeName>
</protein>